<gene>
    <name evidence="1" type="primary">dps</name>
    <name type="ordered locus">PC1_1585</name>
</gene>
<protein>
    <recommendedName>
        <fullName evidence="1">DNA protection during starvation protein</fullName>
        <ecNumber evidence="1">1.16.-.-</ecNumber>
    </recommendedName>
</protein>
<accession>C6DEE2</accession>
<name>DPS_PECCP</name>
<feature type="chain" id="PRO_1000215288" description="DNA protection during starvation protein">
    <location>
        <begin position="1"/>
        <end position="167"/>
    </location>
</feature>
<feature type="binding site" evidence="1">
    <location>
        <position position="51"/>
    </location>
    <ligand>
        <name>Fe cation</name>
        <dbReference type="ChEBI" id="CHEBI:24875"/>
    </ligand>
</feature>
<feature type="binding site" evidence="1">
    <location>
        <position position="78"/>
    </location>
    <ligand>
        <name>Fe cation</name>
        <dbReference type="ChEBI" id="CHEBI:24875"/>
    </ligand>
</feature>
<feature type="binding site" evidence="1">
    <location>
        <position position="82"/>
    </location>
    <ligand>
        <name>Fe cation</name>
        <dbReference type="ChEBI" id="CHEBI:24875"/>
    </ligand>
</feature>
<dbReference type="EC" id="1.16.-.-" evidence="1"/>
<dbReference type="EMBL" id="CP001657">
    <property type="protein sequence ID" value="ACT12627.1"/>
    <property type="molecule type" value="Genomic_DNA"/>
</dbReference>
<dbReference type="RefSeq" id="WP_015839848.1">
    <property type="nucleotide sequence ID" value="NC_012917.1"/>
</dbReference>
<dbReference type="SMR" id="C6DEE2"/>
<dbReference type="STRING" id="561230.PC1_1585"/>
<dbReference type="GeneID" id="93389854"/>
<dbReference type="KEGG" id="pct:PC1_1585"/>
<dbReference type="eggNOG" id="COG0783">
    <property type="taxonomic scope" value="Bacteria"/>
</dbReference>
<dbReference type="HOGENOM" id="CLU_098183_1_2_6"/>
<dbReference type="OrthoDB" id="9797687at2"/>
<dbReference type="Proteomes" id="UP000002736">
    <property type="component" value="Chromosome"/>
</dbReference>
<dbReference type="GO" id="GO:0005737">
    <property type="term" value="C:cytoplasm"/>
    <property type="evidence" value="ECO:0007669"/>
    <property type="project" value="UniProtKB-SubCell"/>
</dbReference>
<dbReference type="GO" id="GO:0003677">
    <property type="term" value="F:DNA binding"/>
    <property type="evidence" value="ECO:0007669"/>
    <property type="project" value="UniProtKB-UniRule"/>
</dbReference>
<dbReference type="GO" id="GO:0008199">
    <property type="term" value="F:ferric iron binding"/>
    <property type="evidence" value="ECO:0007669"/>
    <property type="project" value="UniProtKB-UniRule"/>
</dbReference>
<dbReference type="GO" id="GO:0016722">
    <property type="term" value="F:oxidoreductase activity, acting on metal ions"/>
    <property type="evidence" value="ECO:0007669"/>
    <property type="project" value="InterPro"/>
</dbReference>
<dbReference type="GO" id="GO:0030261">
    <property type="term" value="P:chromosome condensation"/>
    <property type="evidence" value="ECO:0007669"/>
    <property type="project" value="UniProtKB-KW"/>
</dbReference>
<dbReference type="GO" id="GO:0006879">
    <property type="term" value="P:intracellular iron ion homeostasis"/>
    <property type="evidence" value="ECO:0007669"/>
    <property type="project" value="UniProtKB-KW"/>
</dbReference>
<dbReference type="CDD" id="cd01043">
    <property type="entry name" value="DPS"/>
    <property type="match status" value="1"/>
</dbReference>
<dbReference type="Gene3D" id="1.20.1260.10">
    <property type="match status" value="1"/>
</dbReference>
<dbReference type="HAMAP" id="MF_01441">
    <property type="entry name" value="Dps"/>
    <property type="match status" value="1"/>
</dbReference>
<dbReference type="InterPro" id="IPR002177">
    <property type="entry name" value="DPS_DNA-bd"/>
</dbReference>
<dbReference type="InterPro" id="IPR023188">
    <property type="entry name" value="DPS_DNA-bd_CS"/>
</dbReference>
<dbReference type="InterPro" id="IPR023067">
    <property type="entry name" value="Dps_gammaproteobac"/>
</dbReference>
<dbReference type="InterPro" id="IPR012347">
    <property type="entry name" value="Ferritin-like"/>
</dbReference>
<dbReference type="InterPro" id="IPR009078">
    <property type="entry name" value="Ferritin-like_SF"/>
</dbReference>
<dbReference type="InterPro" id="IPR008331">
    <property type="entry name" value="Ferritin_DPS_dom"/>
</dbReference>
<dbReference type="NCBIfam" id="NF006975">
    <property type="entry name" value="PRK09448.1"/>
    <property type="match status" value="1"/>
</dbReference>
<dbReference type="PANTHER" id="PTHR42932:SF3">
    <property type="entry name" value="DNA PROTECTION DURING STARVATION PROTEIN"/>
    <property type="match status" value="1"/>
</dbReference>
<dbReference type="PANTHER" id="PTHR42932">
    <property type="entry name" value="GENERAL STRESS PROTEIN 20U"/>
    <property type="match status" value="1"/>
</dbReference>
<dbReference type="Pfam" id="PF00210">
    <property type="entry name" value="Ferritin"/>
    <property type="match status" value="1"/>
</dbReference>
<dbReference type="PIRSF" id="PIRSF005900">
    <property type="entry name" value="Dps"/>
    <property type="match status" value="1"/>
</dbReference>
<dbReference type="PRINTS" id="PR01346">
    <property type="entry name" value="HELNAPAPROT"/>
</dbReference>
<dbReference type="SUPFAM" id="SSF47240">
    <property type="entry name" value="Ferritin-like"/>
    <property type="match status" value="1"/>
</dbReference>
<dbReference type="PROSITE" id="PS00818">
    <property type="entry name" value="DPS_1"/>
    <property type="match status" value="1"/>
</dbReference>
<comment type="function">
    <text evidence="1">During stationary phase, binds the chromosome non-specifically, forming a highly ordered and stable dps-DNA co-crystal within which chromosomal DNA is condensed and protected from diverse damages. It protects DNA from oxidative damage by sequestering intracellular Fe(2+) ion and storing it in the form of Fe(3+) oxyhydroxide mineral, which can be released after reduction. One hydrogen peroxide oxidizes two Fe(2+) ions, which prevents hydroxyl radical production by the Fenton reaction.</text>
</comment>
<comment type="catalytic activity">
    <reaction evidence="1">
        <text>2 Fe(2+) + H2O2 + 2 H(+) = 2 Fe(3+) + 2 H2O</text>
        <dbReference type="Rhea" id="RHEA:48712"/>
        <dbReference type="ChEBI" id="CHEBI:15377"/>
        <dbReference type="ChEBI" id="CHEBI:15378"/>
        <dbReference type="ChEBI" id="CHEBI:16240"/>
        <dbReference type="ChEBI" id="CHEBI:29033"/>
        <dbReference type="ChEBI" id="CHEBI:29034"/>
    </reaction>
</comment>
<comment type="subunit">
    <text evidence="1">Homododecamer. The 12 subunits form a hollow sphere into which the mineral iron core of up to 500 Fe(3+) can be deposited.</text>
</comment>
<comment type="subcellular location">
    <subcellularLocation>
        <location evidence="1">Cytoplasm</location>
    </subcellularLocation>
</comment>
<comment type="similarity">
    <text evidence="1">Belongs to the Dps family.</text>
</comment>
<organism>
    <name type="scientific">Pectobacterium carotovorum subsp. carotovorum (strain PC1)</name>
    <dbReference type="NCBI Taxonomy" id="561230"/>
    <lineage>
        <taxon>Bacteria</taxon>
        <taxon>Pseudomonadati</taxon>
        <taxon>Pseudomonadota</taxon>
        <taxon>Gammaproteobacteria</taxon>
        <taxon>Enterobacterales</taxon>
        <taxon>Pectobacteriaceae</taxon>
        <taxon>Pectobacterium</taxon>
    </lineage>
</organism>
<reference key="1">
    <citation type="submission" date="2009-07" db="EMBL/GenBank/DDBJ databases">
        <title>Complete sequence of Pectobacterium carotovorum subsp. carotovorum PC1.</title>
        <authorList>
            <consortium name="US DOE Joint Genome Institute"/>
            <person name="Lucas S."/>
            <person name="Copeland A."/>
            <person name="Lapidus A."/>
            <person name="Glavina del Rio T."/>
            <person name="Tice H."/>
            <person name="Bruce D."/>
            <person name="Goodwin L."/>
            <person name="Pitluck S."/>
            <person name="Munk A.C."/>
            <person name="Brettin T."/>
            <person name="Detter J.C."/>
            <person name="Han C."/>
            <person name="Tapia R."/>
            <person name="Larimer F."/>
            <person name="Land M."/>
            <person name="Hauser L."/>
            <person name="Kyrpides N."/>
            <person name="Mikhailova N."/>
            <person name="Balakrishnan V."/>
            <person name="Glasner J."/>
            <person name="Perna N.T."/>
        </authorList>
    </citation>
    <scope>NUCLEOTIDE SEQUENCE [LARGE SCALE GENOMIC DNA]</scope>
    <source>
        <strain>PC1</strain>
    </source>
</reference>
<keyword id="KW-0963">Cytoplasm</keyword>
<keyword id="KW-0226">DNA condensation</keyword>
<keyword id="KW-0238">DNA-binding</keyword>
<keyword id="KW-0408">Iron</keyword>
<keyword id="KW-0409">Iron storage</keyword>
<keyword id="KW-0479">Metal-binding</keyword>
<keyword id="KW-0560">Oxidoreductase</keyword>
<sequence>MSTAKLVKSAPSALLYTRNDLDDSVKTSTIALLNQLVVDFIDLSLITKQAHWNMRGANFIAVHEMLDGFRTSIIDHQDTIAERVVQIGGVALGTVQIVGKQTSLKSYPTNIHSVQDHLKALAERYAIVANNVRKAIGKTEDEASADILTAASRDLDQFLWFIESNIE</sequence>
<proteinExistence type="inferred from homology"/>
<evidence type="ECO:0000255" key="1">
    <source>
        <dbReference type="HAMAP-Rule" id="MF_01441"/>
    </source>
</evidence>